<evidence type="ECO:0000255" key="1">
    <source>
        <dbReference type="HAMAP-Rule" id="MF_00435"/>
    </source>
</evidence>
<evidence type="ECO:0000255" key="2">
    <source>
        <dbReference type="PROSITE-ProRule" id="PRU01197"/>
    </source>
</evidence>
<evidence type="ECO:0000255" key="3">
    <source>
        <dbReference type="PROSITE-ProRule" id="PRU01198"/>
    </source>
</evidence>
<gene>
    <name evidence="1" type="primary">ilvC</name>
    <name type="ordered locus">Atu2019</name>
    <name type="ORF">AGR_C_3660</name>
</gene>
<accession>Q8UDV0</accession>
<sequence length="339" mass="36710">MRVYYDRDADLNLIKSKNVVIVGYGSQGRAHALNLKDSGAKNVVIALKAGSPTVKKAEADGFKVMTVAEAAKWGDLLMMATPDELQADIYKADIAGNIRDGAAIAFAHGLNVHFGLIEPKASLDVVMIAPKGPGHTVRGEYQKGGGVPCLVAVHHNASGNALELALSYACGVGGGRSGIIETNFKEECETDLFGEQVVLCGGLVELIRAGFETLTEAGYAPEMAYFECLHEVKLIVDLIYEGGIANMNYSISNTAEWGEYVTGPRIITAETKAEMKRVLHDIQTGKFTSDWMQEYRSGAARFKGIRRMNDTHQIEEVGAKLRGMMPWIGKNKLVDKAVN</sequence>
<proteinExistence type="inferred from homology"/>
<reference key="1">
    <citation type="journal article" date="2001" name="Science">
        <title>The genome of the natural genetic engineer Agrobacterium tumefaciens C58.</title>
        <authorList>
            <person name="Wood D.W."/>
            <person name="Setubal J.C."/>
            <person name="Kaul R."/>
            <person name="Monks D.E."/>
            <person name="Kitajima J.P."/>
            <person name="Okura V.K."/>
            <person name="Zhou Y."/>
            <person name="Chen L."/>
            <person name="Wood G.E."/>
            <person name="Almeida N.F. Jr."/>
            <person name="Woo L."/>
            <person name="Chen Y."/>
            <person name="Paulsen I.T."/>
            <person name="Eisen J.A."/>
            <person name="Karp P.D."/>
            <person name="Bovee D. Sr."/>
            <person name="Chapman P."/>
            <person name="Clendenning J."/>
            <person name="Deatherage G."/>
            <person name="Gillet W."/>
            <person name="Grant C."/>
            <person name="Kutyavin T."/>
            <person name="Levy R."/>
            <person name="Li M.-J."/>
            <person name="McClelland E."/>
            <person name="Palmieri A."/>
            <person name="Raymond C."/>
            <person name="Rouse G."/>
            <person name="Saenphimmachak C."/>
            <person name="Wu Z."/>
            <person name="Romero P."/>
            <person name="Gordon D."/>
            <person name="Zhang S."/>
            <person name="Yoo H."/>
            <person name="Tao Y."/>
            <person name="Biddle P."/>
            <person name="Jung M."/>
            <person name="Krespan W."/>
            <person name="Perry M."/>
            <person name="Gordon-Kamm B."/>
            <person name="Liao L."/>
            <person name="Kim S."/>
            <person name="Hendrick C."/>
            <person name="Zhao Z.-Y."/>
            <person name="Dolan M."/>
            <person name="Chumley F."/>
            <person name="Tingey S.V."/>
            <person name="Tomb J.-F."/>
            <person name="Gordon M.P."/>
            <person name="Olson M.V."/>
            <person name="Nester E.W."/>
        </authorList>
    </citation>
    <scope>NUCLEOTIDE SEQUENCE [LARGE SCALE GENOMIC DNA]</scope>
    <source>
        <strain>C58 / ATCC 33970</strain>
    </source>
</reference>
<reference key="2">
    <citation type="journal article" date="2001" name="Science">
        <title>Genome sequence of the plant pathogen and biotechnology agent Agrobacterium tumefaciens C58.</title>
        <authorList>
            <person name="Goodner B."/>
            <person name="Hinkle G."/>
            <person name="Gattung S."/>
            <person name="Miller N."/>
            <person name="Blanchard M."/>
            <person name="Qurollo B."/>
            <person name="Goldman B.S."/>
            <person name="Cao Y."/>
            <person name="Askenazi M."/>
            <person name="Halling C."/>
            <person name="Mullin L."/>
            <person name="Houmiel K."/>
            <person name="Gordon J."/>
            <person name="Vaudin M."/>
            <person name="Iartchouk O."/>
            <person name="Epp A."/>
            <person name="Liu F."/>
            <person name="Wollam C."/>
            <person name="Allinger M."/>
            <person name="Doughty D."/>
            <person name="Scott C."/>
            <person name="Lappas C."/>
            <person name="Markelz B."/>
            <person name="Flanagan C."/>
            <person name="Crowell C."/>
            <person name="Gurson J."/>
            <person name="Lomo C."/>
            <person name="Sear C."/>
            <person name="Strub G."/>
            <person name="Cielo C."/>
            <person name="Slater S."/>
        </authorList>
    </citation>
    <scope>NUCLEOTIDE SEQUENCE [LARGE SCALE GENOMIC DNA]</scope>
    <source>
        <strain>C58 / ATCC 33970</strain>
    </source>
</reference>
<name>ILVC_AGRFC</name>
<feature type="chain" id="PRO_0000151267" description="Ketol-acid reductoisomerase (NADP(+))">
    <location>
        <begin position="1"/>
        <end position="339"/>
    </location>
</feature>
<feature type="domain" description="KARI N-terminal Rossmann" evidence="2">
    <location>
        <begin position="1"/>
        <end position="182"/>
    </location>
</feature>
<feature type="domain" description="KARI C-terminal knotted" evidence="3">
    <location>
        <begin position="183"/>
        <end position="328"/>
    </location>
</feature>
<feature type="active site" evidence="1">
    <location>
        <position position="108"/>
    </location>
</feature>
<feature type="binding site" evidence="1">
    <location>
        <begin position="24"/>
        <end position="27"/>
    </location>
    <ligand>
        <name>NADP(+)</name>
        <dbReference type="ChEBI" id="CHEBI:58349"/>
    </ligand>
</feature>
<feature type="binding site" evidence="1">
    <location>
        <position position="48"/>
    </location>
    <ligand>
        <name>NADP(+)</name>
        <dbReference type="ChEBI" id="CHEBI:58349"/>
    </ligand>
</feature>
<feature type="binding site" evidence="1">
    <location>
        <position position="51"/>
    </location>
    <ligand>
        <name>NADP(+)</name>
        <dbReference type="ChEBI" id="CHEBI:58349"/>
    </ligand>
</feature>
<feature type="binding site" evidence="1">
    <location>
        <position position="53"/>
    </location>
    <ligand>
        <name>NADP(+)</name>
        <dbReference type="ChEBI" id="CHEBI:58349"/>
    </ligand>
</feature>
<feature type="binding site" evidence="1">
    <location>
        <begin position="83"/>
        <end position="86"/>
    </location>
    <ligand>
        <name>NADP(+)</name>
        <dbReference type="ChEBI" id="CHEBI:58349"/>
    </ligand>
</feature>
<feature type="binding site" evidence="1">
    <location>
        <position position="134"/>
    </location>
    <ligand>
        <name>NADP(+)</name>
        <dbReference type="ChEBI" id="CHEBI:58349"/>
    </ligand>
</feature>
<feature type="binding site" evidence="1">
    <location>
        <position position="191"/>
    </location>
    <ligand>
        <name>Mg(2+)</name>
        <dbReference type="ChEBI" id="CHEBI:18420"/>
        <label>1</label>
    </ligand>
</feature>
<feature type="binding site" evidence="1">
    <location>
        <position position="191"/>
    </location>
    <ligand>
        <name>Mg(2+)</name>
        <dbReference type="ChEBI" id="CHEBI:18420"/>
        <label>2</label>
    </ligand>
</feature>
<feature type="binding site" evidence="1">
    <location>
        <position position="195"/>
    </location>
    <ligand>
        <name>Mg(2+)</name>
        <dbReference type="ChEBI" id="CHEBI:18420"/>
        <label>1</label>
    </ligand>
</feature>
<feature type="binding site" evidence="1">
    <location>
        <position position="227"/>
    </location>
    <ligand>
        <name>Mg(2+)</name>
        <dbReference type="ChEBI" id="CHEBI:18420"/>
        <label>2</label>
    </ligand>
</feature>
<feature type="binding site" evidence="1">
    <location>
        <position position="231"/>
    </location>
    <ligand>
        <name>Mg(2+)</name>
        <dbReference type="ChEBI" id="CHEBI:18420"/>
        <label>2</label>
    </ligand>
</feature>
<feature type="binding site" evidence="1">
    <location>
        <position position="252"/>
    </location>
    <ligand>
        <name>substrate</name>
    </ligand>
</feature>
<keyword id="KW-0028">Amino-acid biosynthesis</keyword>
<keyword id="KW-0100">Branched-chain amino acid biosynthesis</keyword>
<keyword id="KW-0460">Magnesium</keyword>
<keyword id="KW-0479">Metal-binding</keyword>
<keyword id="KW-0521">NADP</keyword>
<keyword id="KW-0560">Oxidoreductase</keyword>
<keyword id="KW-1185">Reference proteome</keyword>
<dbReference type="EC" id="1.1.1.86" evidence="1"/>
<dbReference type="EMBL" id="AE007869">
    <property type="protein sequence ID" value="AAK87773.1"/>
    <property type="molecule type" value="Genomic_DNA"/>
</dbReference>
<dbReference type="PIR" id="AE2824">
    <property type="entry name" value="AE2824"/>
</dbReference>
<dbReference type="PIR" id="D97602">
    <property type="entry name" value="D97602"/>
</dbReference>
<dbReference type="RefSeq" id="NP_354988.1">
    <property type="nucleotide sequence ID" value="NC_003062.2"/>
</dbReference>
<dbReference type="RefSeq" id="WP_010972004.1">
    <property type="nucleotide sequence ID" value="NC_003062.2"/>
</dbReference>
<dbReference type="SMR" id="Q8UDV0"/>
<dbReference type="STRING" id="176299.Atu2019"/>
<dbReference type="EnsemblBacteria" id="AAK87773">
    <property type="protein sequence ID" value="AAK87773"/>
    <property type="gene ID" value="Atu2019"/>
</dbReference>
<dbReference type="GeneID" id="1134057"/>
<dbReference type="KEGG" id="atu:Atu2019"/>
<dbReference type="PATRIC" id="fig|176299.10.peg.2028"/>
<dbReference type="eggNOG" id="COG0059">
    <property type="taxonomic scope" value="Bacteria"/>
</dbReference>
<dbReference type="HOGENOM" id="CLU_033821_0_1_5"/>
<dbReference type="OrthoDB" id="9804088at2"/>
<dbReference type="PhylomeDB" id="Q8UDV0"/>
<dbReference type="BioCyc" id="AGRO:ATU2019-MONOMER"/>
<dbReference type="UniPathway" id="UPA00047">
    <property type="reaction ID" value="UER00056"/>
</dbReference>
<dbReference type="UniPathway" id="UPA00049">
    <property type="reaction ID" value="UER00060"/>
</dbReference>
<dbReference type="Proteomes" id="UP000000813">
    <property type="component" value="Chromosome circular"/>
</dbReference>
<dbReference type="GO" id="GO:0005829">
    <property type="term" value="C:cytosol"/>
    <property type="evidence" value="ECO:0007669"/>
    <property type="project" value="TreeGrafter"/>
</dbReference>
<dbReference type="GO" id="GO:0004455">
    <property type="term" value="F:ketol-acid reductoisomerase activity"/>
    <property type="evidence" value="ECO:0007669"/>
    <property type="project" value="UniProtKB-UniRule"/>
</dbReference>
<dbReference type="GO" id="GO:0000287">
    <property type="term" value="F:magnesium ion binding"/>
    <property type="evidence" value="ECO:0007669"/>
    <property type="project" value="UniProtKB-UniRule"/>
</dbReference>
<dbReference type="GO" id="GO:0050661">
    <property type="term" value="F:NADP binding"/>
    <property type="evidence" value="ECO:0007669"/>
    <property type="project" value="InterPro"/>
</dbReference>
<dbReference type="GO" id="GO:0009097">
    <property type="term" value="P:isoleucine biosynthetic process"/>
    <property type="evidence" value="ECO:0007669"/>
    <property type="project" value="UniProtKB-UniRule"/>
</dbReference>
<dbReference type="GO" id="GO:0009099">
    <property type="term" value="P:L-valine biosynthetic process"/>
    <property type="evidence" value="ECO:0007669"/>
    <property type="project" value="UniProtKB-UniRule"/>
</dbReference>
<dbReference type="FunFam" id="3.40.50.720:FF:000023">
    <property type="entry name" value="Ketol-acid reductoisomerase (NADP(+))"/>
    <property type="match status" value="1"/>
</dbReference>
<dbReference type="Gene3D" id="6.10.240.10">
    <property type="match status" value="1"/>
</dbReference>
<dbReference type="Gene3D" id="3.40.50.720">
    <property type="entry name" value="NAD(P)-binding Rossmann-like Domain"/>
    <property type="match status" value="1"/>
</dbReference>
<dbReference type="HAMAP" id="MF_00435">
    <property type="entry name" value="IlvC"/>
    <property type="match status" value="1"/>
</dbReference>
<dbReference type="InterPro" id="IPR008927">
    <property type="entry name" value="6-PGluconate_DH-like_C_sf"/>
</dbReference>
<dbReference type="InterPro" id="IPR013023">
    <property type="entry name" value="KARI"/>
</dbReference>
<dbReference type="InterPro" id="IPR000506">
    <property type="entry name" value="KARI_C"/>
</dbReference>
<dbReference type="InterPro" id="IPR013116">
    <property type="entry name" value="KARI_N"/>
</dbReference>
<dbReference type="InterPro" id="IPR014359">
    <property type="entry name" value="KARI_prok"/>
</dbReference>
<dbReference type="InterPro" id="IPR036291">
    <property type="entry name" value="NAD(P)-bd_dom_sf"/>
</dbReference>
<dbReference type="NCBIfam" id="TIGR00465">
    <property type="entry name" value="ilvC"/>
    <property type="match status" value="1"/>
</dbReference>
<dbReference type="NCBIfam" id="NF004017">
    <property type="entry name" value="PRK05479.1"/>
    <property type="match status" value="1"/>
</dbReference>
<dbReference type="NCBIfam" id="NF009940">
    <property type="entry name" value="PRK13403.1"/>
    <property type="match status" value="1"/>
</dbReference>
<dbReference type="PANTHER" id="PTHR21371">
    <property type="entry name" value="KETOL-ACID REDUCTOISOMERASE, MITOCHONDRIAL"/>
    <property type="match status" value="1"/>
</dbReference>
<dbReference type="PANTHER" id="PTHR21371:SF1">
    <property type="entry name" value="KETOL-ACID REDUCTOISOMERASE, MITOCHONDRIAL"/>
    <property type="match status" value="1"/>
</dbReference>
<dbReference type="Pfam" id="PF01450">
    <property type="entry name" value="KARI_C"/>
    <property type="match status" value="1"/>
</dbReference>
<dbReference type="Pfam" id="PF07991">
    <property type="entry name" value="KARI_N"/>
    <property type="match status" value="1"/>
</dbReference>
<dbReference type="PIRSF" id="PIRSF000116">
    <property type="entry name" value="IlvC_gammaproteo"/>
    <property type="match status" value="1"/>
</dbReference>
<dbReference type="SUPFAM" id="SSF48179">
    <property type="entry name" value="6-phosphogluconate dehydrogenase C-terminal domain-like"/>
    <property type="match status" value="1"/>
</dbReference>
<dbReference type="SUPFAM" id="SSF51735">
    <property type="entry name" value="NAD(P)-binding Rossmann-fold domains"/>
    <property type="match status" value="1"/>
</dbReference>
<dbReference type="PROSITE" id="PS51851">
    <property type="entry name" value="KARI_C"/>
    <property type="match status" value="1"/>
</dbReference>
<dbReference type="PROSITE" id="PS51850">
    <property type="entry name" value="KARI_N"/>
    <property type="match status" value="1"/>
</dbReference>
<comment type="function">
    <text evidence="1">Involved in the biosynthesis of branched-chain amino acids (BCAA). Catalyzes an alkyl-migration followed by a ketol-acid reduction of (S)-2-acetolactate (S2AL) to yield (R)-2,3-dihydroxy-isovalerate. In the isomerase reaction, S2AL is rearranged via a Mg-dependent methyl migration to produce 3-hydroxy-3-methyl-2-ketobutyrate (HMKB). In the reductase reaction, this 2-ketoacid undergoes a metal-dependent reduction by NADPH to yield (R)-2,3-dihydroxy-isovalerate.</text>
</comment>
<comment type="catalytic activity">
    <reaction evidence="1">
        <text>(2R)-2,3-dihydroxy-3-methylbutanoate + NADP(+) = (2S)-2-acetolactate + NADPH + H(+)</text>
        <dbReference type="Rhea" id="RHEA:22068"/>
        <dbReference type="ChEBI" id="CHEBI:15378"/>
        <dbReference type="ChEBI" id="CHEBI:49072"/>
        <dbReference type="ChEBI" id="CHEBI:57783"/>
        <dbReference type="ChEBI" id="CHEBI:58349"/>
        <dbReference type="ChEBI" id="CHEBI:58476"/>
        <dbReference type="EC" id="1.1.1.86"/>
    </reaction>
</comment>
<comment type="catalytic activity">
    <reaction evidence="1">
        <text>(2R,3R)-2,3-dihydroxy-3-methylpentanoate + NADP(+) = (S)-2-ethyl-2-hydroxy-3-oxobutanoate + NADPH + H(+)</text>
        <dbReference type="Rhea" id="RHEA:13493"/>
        <dbReference type="ChEBI" id="CHEBI:15378"/>
        <dbReference type="ChEBI" id="CHEBI:49256"/>
        <dbReference type="ChEBI" id="CHEBI:49258"/>
        <dbReference type="ChEBI" id="CHEBI:57783"/>
        <dbReference type="ChEBI" id="CHEBI:58349"/>
        <dbReference type="EC" id="1.1.1.86"/>
    </reaction>
</comment>
<comment type="cofactor">
    <cofactor evidence="1">
        <name>Mg(2+)</name>
        <dbReference type="ChEBI" id="CHEBI:18420"/>
    </cofactor>
    <text evidence="1">Binds 2 magnesium ions per subunit.</text>
</comment>
<comment type="pathway">
    <text evidence="1">Amino-acid biosynthesis; L-isoleucine biosynthesis; L-isoleucine from 2-oxobutanoate: step 2/4.</text>
</comment>
<comment type="pathway">
    <text evidence="1">Amino-acid biosynthesis; L-valine biosynthesis; L-valine from pyruvate: step 2/4.</text>
</comment>
<comment type="similarity">
    <text evidence="1">Belongs to the ketol-acid reductoisomerase family.</text>
</comment>
<organism>
    <name type="scientific">Agrobacterium fabrum (strain C58 / ATCC 33970)</name>
    <name type="common">Agrobacterium tumefaciens (strain C58)</name>
    <dbReference type="NCBI Taxonomy" id="176299"/>
    <lineage>
        <taxon>Bacteria</taxon>
        <taxon>Pseudomonadati</taxon>
        <taxon>Pseudomonadota</taxon>
        <taxon>Alphaproteobacteria</taxon>
        <taxon>Hyphomicrobiales</taxon>
        <taxon>Rhizobiaceae</taxon>
        <taxon>Rhizobium/Agrobacterium group</taxon>
        <taxon>Agrobacterium</taxon>
        <taxon>Agrobacterium tumefaciens complex</taxon>
    </lineage>
</organism>
<protein>
    <recommendedName>
        <fullName evidence="1">Ketol-acid reductoisomerase (NADP(+))</fullName>
        <shortName evidence="1">KARI</shortName>
        <ecNumber evidence="1">1.1.1.86</ecNumber>
    </recommendedName>
    <alternativeName>
        <fullName evidence="1">Acetohydroxy-acid isomeroreductase</fullName>
        <shortName evidence="1">AHIR</shortName>
    </alternativeName>
    <alternativeName>
        <fullName evidence="1">Alpha-keto-beta-hydroxylacyl reductoisomerase</fullName>
    </alternativeName>
    <alternativeName>
        <fullName evidence="1">Ketol-acid reductoisomerase type 1</fullName>
    </alternativeName>
    <alternativeName>
        <fullName evidence="1">Ketol-acid reductoisomerase type I</fullName>
    </alternativeName>
</protein>